<feature type="chain" id="PRO_0000285348" description="Protein DSE1">
    <location>
        <begin position="1"/>
        <end position="580"/>
    </location>
</feature>
<feature type="repeat" description="WD 1">
    <location>
        <begin position="102"/>
        <end position="141"/>
    </location>
</feature>
<feature type="repeat" description="WD 2">
    <location>
        <begin position="170"/>
        <end position="209"/>
    </location>
</feature>
<feature type="repeat" description="WD 3">
    <location>
        <begin position="222"/>
        <end position="261"/>
    </location>
</feature>
<feature type="repeat" description="WD 4">
    <location>
        <begin position="333"/>
        <end position="370"/>
    </location>
</feature>
<feature type="repeat" description="WD 5">
    <location>
        <begin position="373"/>
        <end position="412"/>
    </location>
</feature>
<feature type="region of interest" description="Disordered" evidence="2">
    <location>
        <begin position="497"/>
        <end position="534"/>
    </location>
</feature>
<feature type="compositionally biased region" description="Polar residues" evidence="2">
    <location>
        <begin position="510"/>
        <end position="526"/>
    </location>
</feature>
<dbReference type="EMBL" id="CR382125">
    <property type="protein sequence ID" value="CAG99648.1"/>
    <property type="molecule type" value="Genomic_DNA"/>
</dbReference>
<dbReference type="RefSeq" id="XP_454561.1">
    <property type="nucleotide sequence ID" value="XM_454561.1"/>
</dbReference>
<dbReference type="SMR" id="Q6CNC8"/>
<dbReference type="FunCoup" id="Q6CNC8">
    <property type="interactions" value="43"/>
</dbReference>
<dbReference type="STRING" id="284590.Q6CNC8"/>
<dbReference type="PaxDb" id="284590-Q6CNC8"/>
<dbReference type="KEGG" id="kla:KLLA0_E13553g"/>
<dbReference type="eggNOG" id="ENOG502QTST">
    <property type="taxonomic scope" value="Eukaryota"/>
</dbReference>
<dbReference type="HOGENOM" id="CLU_033098_0_0_1"/>
<dbReference type="InParanoid" id="Q6CNC8"/>
<dbReference type="OMA" id="VKRFNHR"/>
<dbReference type="Proteomes" id="UP000000598">
    <property type="component" value="Chromosome E"/>
</dbReference>
<dbReference type="GO" id="GO:0051301">
    <property type="term" value="P:cell division"/>
    <property type="evidence" value="ECO:0007669"/>
    <property type="project" value="UniProtKB-KW"/>
</dbReference>
<dbReference type="GO" id="GO:0071555">
    <property type="term" value="P:cell wall organization"/>
    <property type="evidence" value="ECO:0007669"/>
    <property type="project" value="UniProtKB-KW"/>
</dbReference>
<dbReference type="Gene3D" id="2.130.10.10">
    <property type="entry name" value="YVTN repeat-like/Quinoprotein amine dehydrogenase"/>
    <property type="match status" value="1"/>
</dbReference>
<dbReference type="InterPro" id="IPR011047">
    <property type="entry name" value="Quinoprotein_ADH-like_sf"/>
</dbReference>
<dbReference type="InterPro" id="IPR015943">
    <property type="entry name" value="WD40/YVTN_repeat-like_dom_sf"/>
</dbReference>
<dbReference type="InterPro" id="IPR001680">
    <property type="entry name" value="WD40_rpt"/>
</dbReference>
<dbReference type="SUPFAM" id="SSF50998">
    <property type="entry name" value="Quinoprotein alcohol dehydrogenase-like"/>
    <property type="match status" value="1"/>
</dbReference>
<dbReference type="PROSITE" id="PS50082">
    <property type="entry name" value="WD_REPEATS_2"/>
    <property type="match status" value="1"/>
</dbReference>
<dbReference type="PROSITE" id="PS50294">
    <property type="entry name" value="WD_REPEATS_REGION"/>
    <property type="match status" value="1"/>
</dbReference>
<reference key="1">
    <citation type="journal article" date="2004" name="Nature">
        <title>Genome evolution in yeasts.</title>
        <authorList>
            <person name="Dujon B."/>
            <person name="Sherman D."/>
            <person name="Fischer G."/>
            <person name="Durrens P."/>
            <person name="Casaregola S."/>
            <person name="Lafontaine I."/>
            <person name="de Montigny J."/>
            <person name="Marck C."/>
            <person name="Neuveglise C."/>
            <person name="Talla E."/>
            <person name="Goffard N."/>
            <person name="Frangeul L."/>
            <person name="Aigle M."/>
            <person name="Anthouard V."/>
            <person name="Babour A."/>
            <person name="Barbe V."/>
            <person name="Barnay S."/>
            <person name="Blanchin S."/>
            <person name="Beckerich J.-M."/>
            <person name="Beyne E."/>
            <person name="Bleykasten C."/>
            <person name="Boisrame A."/>
            <person name="Boyer J."/>
            <person name="Cattolico L."/>
            <person name="Confanioleri F."/>
            <person name="de Daruvar A."/>
            <person name="Despons L."/>
            <person name="Fabre E."/>
            <person name="Fairhead C."/>
            <person name="Ferry-Dumazet H."/>
            <person name="Groppi A."/>
            <person name="Hantraye F."/>
            <person name="Hennequin C."/>
            <person name="Jauniaux N."/>
            <person name="Joyet P."/>
            <person name="Kachouri R."/>
            <person name="Kerrest A."/>
            <person name="Koszul R."/>
            <person name="Lemaire M."/>
            <person name="Lesur I."/>
            <person name="Ma L."/>
            <person name="Muller H."/>
            <person name="Nicaud J.-M."/>
            <person name="Nikolski M."/>
            <person name="Oztas S."/>
            <person name="Ozier-Kalogeropoulos O."/>
            <person name="Pellenz S."/>
            <person name="Potier S."/>
            <person name="Richard G.-F."/>
            <person name="Straub M.-L."/>
            <person name="Suleau A."/>
            <person name="Swennen D."/>
            <person name="Tekaia F."/>
            <person name="Wesolowski-Louvel M."/>
            <person name="Westhof E."/>
            <person name="Wirth B."/>
            <person name="Zeniou-Meyer M."/>
            <person name="Zivanovic Y."/>
            <person name="Bolotin-Fukuhara M."/>
            <person name="Thierry A."/>
            <person name="Bouchier C."/>
            <person name="Caudron B."/>
            <person name="Scarpelli C."/>
            <person name="Gaillardin C."/>
            <person name="Weissenbach J."/>
            <person name="Wincker P."/>
            <person name="Souciet J.-L."/>
        </authorList>
    </citation>
    <scope>NUCLEOTIDE SEQUENCE [LARGE SCALE GENOMIC DNA]</scope>
    <source>
        <strain>ATCC 8585 / CBS 2359 / DSM 70799 / NBRC 1267 / NRRL Y-1140 / WM37</strain>
    </source>
</reference>
<evidence type="ECO:0000250" key="1"/>
<evidence type="ECO:0000256" key="2">
    <source>
        <dbReference type="SAM" id="MobiDB-lite"/>
    </source>
</evidence>
<evidence type="ECO:0000305" key="3"/>
<comment type="function">
    <text evidence="1">Involved in cell wall metabolism and required for the separation of the mother and daughter cells.</text>
</comment>
<comment type="similarity">
    <text evidence="3">Belongs to the WD repeat DSE1 family.</text>
</comment>
<accession>Q6CNC8</accession>
<protein>
    <recommendedName>
        <fullName>Protein DSE1</fullName>
    </recommendedName>
    <alternativeName>
        <fullName>Daughter-specific expression protein 1</fullName>
    </alternativeName>
</protein>
<name>DSE1_KLULA</name>
<organism>
    <name type="scientific">Kluyveromyces lactis (strain ATCC 8585 / CBS 2359 / DSM 70799 / NBRC 1267 / NRRL Y-1140 / WM37)</name>
    <name type="common">Yeast</name>
    <name type="synonym">Candida sphaerica</name>
    <dbReference type="NCBI Taxonomy" id="284590"/>
    <lineage>
        <taxon>Eukaryota</taxon>
        <taxon>Fungi</taxon>
        <taxon>Dikarya</taxon>
        <taxon>Ascomycota</taxon>
        <taxon>Saccharomycotina</taxon>
        <taxon>Saccharomycetes</taxon>
        <taxon>Saccharomycetales</taxon>
        <taxon>Saccharomycetaceae</taxon>
        <taxon>Kluyveromyces</taxon>
    </lineage>
</organism>
<gene>
    <name type="primary">DSE1</name>
    <name type="ordered locus">KLLA0E13585g</name>
</gene>
<proteinExistence type="inferred from homology"/>
<sequence length="580" mass="65167">MYLLTINYSLQCKHYTKSNKKLYIAKIMTEFYRAPEIFRQNAIIVKKSRRDISDDENSTIVRRNCKIEASKLNSSLLRKVSGDLNDVIVTKKLKTDCWKLSEDTRDVTSMSLDRDTILLSTSQTSDNLQLFQLRNNEINEQARGGKLLHSLQTITVPGKSILATDIMQSQNNDTVVSFDDKVHDRILLSGHSDGYVNLIATSIENGNAKILRRFNHSKHLKVITDSMDSVDLATQIYNTSRSKPIRHLKTWNKHHFTSVINDSLFVYDVNQQCKDPLYLNSFPGLEHVDVNPVNPFTFSLTGTKFGQSGIALLDLRLGDGNGIRVPGPQDSNAESGKCYTSKWLDEYTVVNSVGKALKIWDIRYGKVRAHLLGHNGHVNSLDYDNEMKKIYSTDDQGLIMSWDIKDLKFTDQVMCCRPSHGIQSFGLPADCVQNGNIIQSPDLERIGNKKHLGSHFVGLADSHFISLQDQELRSYSVVDMPMVLPPPRNPLRLLESVSTETKSEPPATMVYSSSDETTKDSSNSAFEDSEDTLEYEAHSPMTPALDSMFDGKTHSFDIPTIPLLSGIRRGSDATFVCEGL</sequence>
<keyword id="KW-0131">Cell cycle</keyword>
<keyword id="KW-0132">Cell division</keyword>
<keyword id="KW-0961">Cell wall biogenesis/degradation</keyword>
<keyword id="KW-1185">Reference proteome</keyword>
<keyword id="KW-0677">Repeat</keyword>
<keyword id="KW-0853">WD repeat</keyword>